<name>SSRP_PSET1</name>
<gene>
    <name evidence="1" type="primary">smpB</name>
    <name type="ordered locus">PSHAa0841</name>
</gene>
<accession>Q3IE36</accession>
<sequence length="159" mass="18424">MAKNKSSKSTSNTIALNKKARHEYFLHDKFEAGVELQGWEVKSIRAGKVNITETYIHLKNGEAFLLGAQIQPLNSASTHVICDPLRYRKLLLSRRELDRLVGATERDGYSLIATAMYWKNCWVKLEFHLAKGKKLHDKREDGKDKDWSREKERLMKHKA</sequence>
<evidence type="ECO:0000255" key="1">
    <source>
        <dbReference type="HAMAP-Rule" id="MF_00023"/>
    </source>
</evidence>
<evidence type="ECO:0000256" key="2">
    <source>
        <dbReference type="SAM" id="MobiDB-lite"/>
    </source>
</evidence>
<comment type="function">
    <text evidence="1">Required for rescue of stalled ribosomes mediated by trans-translation. Binds to transfer-messenger RNA (tmRNA), required for stable association of tmRNA with ribosomes. tmRNA and SmpB together mimic tRNA shape, replacing the anticodon stem-loop with SmpB. tmRNA is encoded by the ssrA gene; the 2 termini fold to resemble tRNA(Ala) and it encodes a 'tag peptide', a short internal open reading frame. During trans-translation Ala-aminoacylated tmRNA acts like a tRNA, entering the A-site of stalled ribosomes, displacing the stalled mRNA. The ribosome then switches to translate the ORF on the tmRNA; the nascent peptide is terminated with the 'tag peptide' encoded by the tmRNA and targeted for degradation. The ribosome is freed to recommence translation, which seems to be the essential function of trans-translation.</text>
</comment>
<comment type="subcellular location">
    <subcellularLocation>
        <location evidence="1">Cytoplasm</location>
    </subcellularLocation>
    <text evidence="1">The tmRNA-SmpB complex associates with stalled 70S ribosomes.</text>
</comment>
<comment type="similarity">
    <text evidence="1">Belongs to the SmpB family.</text>
</comment>
<feature type="chain" id="PRO_1000002113" description="SsrA-binding protein">
    <location>
        <begin position="1"/>
        <end position="159"/>
    </location>
</feature>
<feature type="region of interest" description="Disordered" evidence="2">
    <location>
        <begin position="138"/>
        <end position="159"/>
    </location>
</feature>
<feature type="compositionally biased region" description="Basic and acidic residues" evidence="2">
    <location>
        <begin position="138"/>
        <end position="153"/>
    </location>
</feature>
<proteinExistence type="inferred from homology"/>
<protein>
    <recommendedName>
        <fullName evidence="1">SsrA-binding protein</fullName>
    </recommendedName>
    <alternativeName>
        <fullName evidence="1">Small protein B</fullName>
    </alternativeName>
</protein>
<dbReference type="EMBL" id="CR954246">
    <property type="protein sequence ID" value="CAI85922.1"/>
    <property type="molecule type" value="Genomic_DNA"/>
</dbReference>
<dbReference type="SMR" id="Q3IE36"/>
<dbReference type="STRING" id="326442.PSHAa0841"/>
<dbReference type="KEGG" id="pha:PSHAa0841"/>
<dbReference type="eggNOG" id="COG0691">
    <property type="taxonomic scope" value="Bacteria"/>
</dbReference>
<dbReference type="HOGENOM" id="CLU_108953_3_0_6"/>
<dbReference type="BioCyc" id="PHAL326442:PSHA_RS04105-MONOMER"/>
<dbReference type="Proteomes" id="UP000006843">
    <property type="component" value="Chromosome I"/>
</dbReference>
<dbReference type="GO" id="GO:0005829">
    <property type="term" value="C:cytosol"/>
    <property type="evidence" value="ECO:0007669"/>
    <property type="project" value="TreeGrafter"/>
</dbReference>
<dbReference type="GO" id="GO:0003723">
    <property type="term" value="F:RNA binding"/>
    <property type="evidence" value="ECO:0007669"/>
    <property type="project" value="UniProtKB-UniRule"/>
</dbReference>
<dbReference type="GO" id="GO:0070929">
    <property type="term" value="P:trans-translation"/>
    <property type="evidence" value="ECO:0007669"/>
    <property type="project" value="UniProtKB-UniRule"/>
</dbReference>
<dbReference type="CDD" id="cd09294">
    <property type="entry name" value="SmpB"/>
    <property type="match status" value="1"/>
</dbReference>
<dbReference type="Gene3D" id="2.40.280.10">
    <property type="match status" value="1"/>
</dbReference>
<dbReference type="HAMAP" id="MF_00023">
    <property type="entry name" value="SmpB"/>
    <property type="match status" value="1"/>
</dbReference>
<dbReference type="InterPro" id="IPR023620">
    <property type="entry name" value="SmpB"/>
</dbReference>
<dbReference type="InterPro" id="IPR000037">
    <property type="entry name" value="SsrA-bd_prot"/>
</dbReference>
<dbReference type="InterPro" id="IPR020081">
    <property type="entry name" value="SsrA-bd_prot_CS"/>
</dbReference>
<dbReference type="NCBIfam" id="NF003843">
    <property type="entry name" value="PRK05422.1"/>
    <property type="match status" value="1"/>
</dbReference>
<dbReference type="NCBIfam" id="TIGR00086">
    <property type="entry name" value="smpB"/>
    <property type="match status" value="1"/>
</dbReference>
<dbReference type="PANTHER" id="PTHR30308:SF2">
    <property type="entry name" value="SSRA-BINDING PROTEIN"/>
    <property type="match status" value="1"/>
</dbReference>
<dbReference type="PANTHER" id="PTHR30308">
    <property type="entry name" value="TMRNA-BINDING COMPONENT OF TRANS-TRANSLATION TAGGING COMPLEX"/>
    <property type="match status" value="1"/>
</dbReference>
<dbReference type="Pfam" id="PF01668">
    <property type="entry name" value="SmpB"/>
    <property type="match status" value="1"/>
</dbReference>
<dbReference type="SUPFAM" id="SSF74982">
    <property type="entry name" value="Small protein B (SmpB)"/>
    <property type="match status" value="1"/>
</dbReference>
<dbReference type="PROSITE" id="PS01317">
    <property type="entry name" value="SSRP"/>
    <property type="match status" value="1"/>
</dbReference>
<organism>
    <name type="scientific">Pseudoalteromonas translucida (strain TAC 125)</name>
    <dbReference type="NCBI Taxonomy" id="326442"/>
    <lineage>
        <taxon>Bacteria</taxon>
        <taxon>Pseudomonadati</taxon>
        <taxon>Pseudomonadota</taxon>
        <taxon>Gammaproteobacteria</taxon>
        <taxon>Alteromonadales</taxon>
        <taxon>Pseudoalteromonadaceae</taxon>
        <taxon>Pseudoalteromonas</taxon>
    </lineage>
</organism>
<keyword id="KW-0963">Cytoplasm</keyword>
<keyword id="KW-1185">Reference proteome</keyword>
<keyword id="KW-0694">RNA-binding</keyword>
<reference key="1">
    <citation type="journal article" date="2005" name="Genome Res.">
        <title>Coping with cold: the genome of the versatile marine Antarctica bacterium Pseudoalteromonas haloplanktis TAC125.</title>
        <authorList>
            <person name="Medigue C."/>
            <person name="Krin E."/>
            <person name="Pascal G."/>
            <person name="Barbe V."/>
            <person name="Bernsel A."/>
            <person name="Bertin P.N."/>
            <person name="Cheung F."/>
            <person name="Cruveiller S."/>
            <person name="D'Amico S."/>
            <person name="Duilio A."/>
            <person name="Fang G."/>
            <person name="Feller G."/>
            <person name="Ho C."/>
            <person name="Mangenot S."/>
            <person name="Marino G."/>
            <person name="Nilsson J."/>
            <person name="Parrilli E."/>
            <person name="Rocha E.P.C."/>
            <person name="Rouy Z."/>
            <person name="Sekowska A."/>
            <person name="Tutino M.L."/>
            <person name="Vallenet D."/>
            <person name="von Heijne G."/>
            <person name="Danchin A."/>
        </authorList>
    </citation>
    <scope>NUCLEOTIDE SEQUENCE [LARGE SCALE GENOMIC DNA]</scope>
    <source>
        <strain>TAC 125</strain>
    </source>
</reference>